<reference key="1">
    <citation type="journal article" date="2009" name="Infect. Immun.">
        <title>Comparative genomics reveal extensive transposon-mediated genomic plasticity and diversity among potential effector proteins within the genus Coxiella.</title>
        <authorList>
            <person name="Beare P.A."/>
            <person name="Unsworth N."/>
            <person name="Andoh M."/>
            <person name="Voth D.E."/>
            <person name="Omsland A."/>
            <person name="Gilk S.D."/>
            <person name="Williams K.P."/>
            <person name="Sobral B.W."/>
            <person name="Kupko J.J. III"/>
            <person name="Porcella S.F."/>
            <person name="Samuel J.E."/>
            <person name="Heinzen R.A."/>
        </authorList>
    </citation>
    <scope>NUCLEOTIDE SEQUENCE [LARGE SCALE GENOMIC DNA]</scope>
    <source>
        <strain>CbuG_Q212</strain>
    </source>
</reference>
<evidence type="ECO:0000255" key="1">
    <source>
        <dbReference type="HAMAP-Rule" id="MF_00204"/>
    </source>
</evidence>
<protein>
    <recommendedName>
        <fullName evidence="1">UvrABC system protein B</fullName>
        <shortName evidence="1">Protein UvrB</shortName>
    </recommendedName>
    <alternativeName>
        <fullName evidence="1">Excinuclease ABC subunit B</fullName>
    </alternativeName>
</protein>
<name>UVRB_COXB2</name>
<keyword id="KW-0067">ATP-binding</keyword>
<keyword id="KW-0963">Cytoplasm</keyword>
<keyword id="KW-0227">DNA damage</keyword>
<keyword id="KW-0228">DNA excision</keyword>
<keyword id="KW-0234">DNA repair</keyword>
<keyword id="KW-0267">Excision nuclease</keyword>
<keyword id="KW-0347">Helicase</keyword>
<keyword id="KW-0378">Hydrolase</keyword>
<keyword id="KW-0547">Nucleotide-binding</keyword>
<keyword id="KW-0742">SOS response</keyword>
<comment type="function">
    <text evidence="1">The UvrABC repair system catalyzes the recognition and processing of DNA lesions. A damage recognition complex composed of 2 UvrA and 2 UvrB subunits scans DNA for abnormalities. Upon binding of the UvrA(2)B(2) complex to a putative damaged site, the DNA wraps around one UvrB monomer. DNA wrap is dependent on ATP binding by UvrB and probably causes local melting of the DNA helix, facilitating insertion of UvrB beta-hairpin between the DNA strands. Then UvrB probes one DNA strand for the presence of a lesion. If a lesion is found the UvrA subunits dissociate and the UvrB-DNA preincision complex is formed. This complex is subsequently bound by UvrC and the second UvrB is released. If no lesion is found, the DNA wraps around the other UvrB subunit that will check the other stand for damage.</text>
</comment>
<comment type="subunit">
    <text evidence="1">Forms a heterotetramer with UvrA during the search for lesions. Interacts with UvrC in an incision complex.</text>
</comment>
<comment type="subcellular location">
    <subcellularLocation>
        <location evidence="1">Cytoplasm</location>
    </subcellularLocation>
</comment>
<comment type="domain">
    <text evidence="1">The beta-hairpin motif is involved in DNA binding.</text>
</comment>
<comment type="similarity">
    <text evidence="1">Belongs to the UvrB family.</text>
</comment>
<dbReference type="EMBL" id="CP001019">
    <property type="protein sequence ID" value="ACJ18777.1"/>
    <property type="molecule type" value="Genomic_DNA"/>
</dbReference>
<dbReference type="RefSeq" id="WP_010957630.1">
    <property type="nucleotide sequence ID" value="NC_011527.1"/>
</dbReference>
<dbReference type="SMR" id="B6J1E8"/>
<dbReference type="KEGG" id="cbg:CbuG_1478"/>
<dbReference type="HOGENOM" id="CLU_009621_2_1_6"/>
<dbReference type="GO" id="GO:0005737">
    <property type="term" value="C:cytoplasm"/>
    <property type="evidence" value="ECO:0007669"/>
    <property type="project" value="UniProtKB-SubCell"/>
</dbReference>
<dbReference type="GO" id="GO:0009380">
    <property type="term" value="C:excinuclease repair complex"/>
    <property type="evidence" value="ECO:0007669"/>
    <property type="project" value="InterPro"/>
</dbReference>
<dbReference type="GO" id="GO:0005524">
    <property type="term" value="F:ATP binding"/>
    <property type="evidence" value="ECO:0007669"/>
    <property type="project" value="UniProtKB-UniRule"/>
</dbReference>
<dbReference type="GO" id="GO:0016887">
    <property type="term" value="F:ATP hydrolysis activity"/>
    <property type="evidence" value="ECO:0007669"/>
    <property type="project" value="InterPro"/>
</dbReference>
<dbReference type="GO" id="GO:0003677">
    <property type="term" value="F:DNA binding"/>
    <property type="evidence" value="ECO:0007669"/>
    <property type="project" value="UniProtKB-UniRule"/>
</dbReference>
<dbReference type="GO" id="GO:0009381">
    <property type="term" value="F:excinuclease ABC activity"/>
    <property type="evidence" value="ECO:0007669"/>
    <property type="project" value="UniProtKB-UniRule"/>
</dbReference>
<dbReference type="GO" id="GO:0004386">
    <property type="term" value="F:helicase activity"/>
    <property type="evidence" value="ECO:0007669"/>
    <property type="project" value="UniProtKB-KW"/>
</dbReference>
<dbReference type="GO" id="GO:0006289">
    <property type="term" value="P:nucleotide-excision repair"/>
    <property type="evidence" value="ECO:0007669"/>
    <property type="project" value="UniProtKB-UniRule"/>
</dbReference>
<dbReference type="GO" id="GO:0009432">
    <property type="term" value="P:SOS response"/>
    <property type="evidence" value="ECO:0007669"/>
    <property type="project" value="UniProtKB-UniRule"/>
</dbReference>
<dbReference type="CDD" id="cd17916">
    <property type="entry name" value="DEXHc_UvrB"/>
    <property type="match status" value="1"/>
</dbReference>
<dbReference type="CDD" id="cd18790">
    <property type="entry name" value="SF2_C_UvrB"/>
    <property type="match status" value="1"/>
</dbReference>
<dbReference type="FunFam" id="3.40.50.300:FF:000477">
    <property type="entry name" value="UvrABC system protein B"/>
    <property type="match status" value="1"/>
</dbReference>
<dbReference type="Gene3D" id="6.10.140.240">
    <property type="match status" value="1"/>
</dbReference>
<dbReference type="Gene3D" id="3.40.50.300">
    <property type="entry name" value="P-loop containing nucleotide triphosphate hydrolases"/>
    <property type="match status" value="3"/>
</dbReference>
<dbReference type="Gene3D" id="4.10.860.10">
    <property type="entry name" value="UVR domain"/>
    <property type="match status" value="1"/>
</dbReference>
<dbReference type="HAMAP" id="MF_00204">
    <property type="entry name" value="UvrB"/>
    <property type="match status" value="1"/>
</dbReference>
<dbReference type="InterPro" id="IPR006935">
    <property type="entry name" value="Helicase/UvrB_N"/>
</dbReference>
<dbReference type="InterPro" id="IPR014001">
    <property type="entry name" value="Helicase_ATP-bd"/>
</dbReference>
<dbReference type="InterPro" id="IPR001650">
    <property type="entry name" value="Helicase_C-like"/>
</dbReference>
<dbReference type="InterPro" id="IPR027417">
    <property type="entry name" value="P-loop_NTPase"/>
</dbReference>
<dbReference type="InterPro" id="IPR001943">
    <property type="entry name" value="UVR_dom"/>
</dbReference>
<dbReference type="InterPro" id="IPR036876">
    <property type="entry name" value="UVR_dom_sf"/>
</dbReference>
<dbReference type="InterPro" id="IPR004807">
    <property type="entry name" value="UvrB"/>
</dbReference>
<dbReference type="InterPro" id="IPR041471">
    <property type="entry name" value="UvrB_inter"/>
</dbReference>
<dbReference type="InterPro" id="IPR024759">
    <property type="entry name" value="UvrB_YAD/RRR_dom"/>
</dbReference>
<dbReference type="NCBIfam" id="NF003673">
    <property type="entry name" value="PRK05298.1"/>
    <property type="match status" value="1"/>
</dbReference>
<dbReference type="NCBIfam" id="TIGR00631">
    <property type="entry name" value="uvrb"/>
    <property type="match status" value="1"/>
</dbReference>
<dbReference type="PANTHER" id="PTHR24029">
    <property type="entry name" value="UVRABC SYSTEM PROTEIN B"/>
    <property type="match status" value="1"/>
</dbReference>
<dbReference type="PANTHER" id="PTHR24029:SF0">
    <property type="entry name" value="UVRABC SYSTEM PROTEIN B"/>
    <property type="match status" value="1"/>
</dbReference>
<dbReference type="Pfam" id="PF00271">
    <property type="entry name" value="Helicase_C"/>
    <property type="match status" value="1"/>
</dbReference>
<dbReference type="Pfam" id="PF04851">
    <property type="entry name" value="ResIII"/>
    <property type="match status" value="1"/>
</dbReference>
<dbReference type="Pfam" id="PF02151">
    <property type="entry name" value="UVR"/>
    <property type="match status" value="1"/>
</dbReference>
<dbReference type="Pfam" id="PF12344">
    <property type="entry name" value="UvrB"/>
    <property type="match status" value="1"/>
</dbReference>
<dbReference type="Pfam" id="PF17757">
    <property type="entry name" value="UvrB_inter"/>
    <property type="match status" value="1"/>
</dbReference>
<dbReference type="SMART" id="SM00487">
    <property type="entry name" value="DEXDc"/>
    <property type="match status" value="1"/>
</dbReference>
<dbReference type="SMART" id="SM00490">
    <property type="entry name" value="HELICc"/>
    <property type="match status" value="1"/>
</dbReference>
<dbReference type="SUPFAM" id="SSF46600">
    <property type="entry name" value="C-terminal UvrC-binding domain of UvrB"/>
    <property type="match status" value="1"/>
</dbReference>
<dbReference type="SUPFAM" id="SSF52540">
    <property type="entry name" value="P-loop containing nucleoside triphosphate hydrolases"/>
    <property type="match status" value="2"/>
</dbReference>
<dbReference type="PROSITE" id="PS51192">
    <property type="entry name" value="HELICASE_ATP_BIND_1"/>
    <property type="match status" value="1"/>
</dbReference>
<dbReference type="PROSITE" id="PS51194">
    <property type="entry name" value="HELICASE_CTER"/>
    <property type="match status" value="1"/>
</dbReference>
<dbReference type="PROSITE" id="PS50151">
    <property type="entry name" value="UVR"/>
    <property type="match status" value="1"/>
</dbReference>
<organism>
    <name type="scientific">Coxiella burnetii (strain CbuG_Q212)</name>
    <name type="common">Coxiella burnetii (strain Q212)</name>
    <dbReference type="NCBI Taxonomy" id="434923"/>
    <lineage>
        <taxon>Bacteria</taxon>
        <taxon>Pseudomonadati</taxon>
        <taxon>Pseudomonadota</taxon>
        <taxon>Gammaproteobacteria</taxon>
        <taxon>Legionellales</taxon>
        <taxon>Coxiellaceae</taxon>
        <taxon>Coxiella</taxon>
    </lineage>
</organism>
<feature type="chain" id="PRO_1000099547" description="UvrABC system protein B">
    <location>
        <begin position="1"/>
        <end position="672"/>
    </location>
</feature>
<feature type="domain" description="Helicase ATP-binding" evidence="1">
    <location>
        <begin position="26"/>
        <end position="181"/>
    </location>
</feature>
<feature type="domain" description="Helicase C-terminal" evidence="1">
    <location>
        <begin position="430"/>
        <end position="592"/>
    </location>
</feature>
<feature type="domain" description="UVR" evidence="1">
    <location>
        <begin position="631"/>
        <end position="666"/>
    </location>
</feature>
<feature type="short sequence motif" description="Beta-hairpin">
    <location>
        <begin position="92"/>
        <end position="115"/>
    </location>
</feature>
<feature type="binding site" evidence="1">
    <location>
        <begin position="39"/>
        <end position="46"/>
    </location>
    <ligand>
        <name>ATP</name>
        <dbReference type="ChEBI" id="CHEBI:30616"/>
    </ligand>
</feature>
<sequence length="672" mass="77336">MSKAFKLTSKFKPSGDQPQAIEKLVAGLEDGLAYQTLLGVTGSGKTFTIANAIEKVQRPTLILEPNKTLAAQFYAEMREFFPENAVEYFVSYYDYYQPEAYVPSSDTYIEKDASINDHIEQMRLSATKAITERHDTIIIATVSAIYGLGDPDSYLKMLLHLTRGDQIDQRKILQRLAELQYTRNDLELRRATYRVNGDIIDIYPADSEREAVRVELFDDEVENLSYFDPLTGEMLRRVPRITVYPKTHYVTPREKLLSTLDQIKIELKERLSQLEKANKLVERQRLEQRTKFDMEMILELGYCSGIENYSRYLSGRNEGEPPPTLIDYLPKDALLIIDESHVTIPQLGGMYRGDRARKETLVEYGFRLPSALDNRPLRFDEFEKLAPQTIFISATPGPYEEKQSDQVVELLVRPTGLIDPEIEVRPVATQVDDLLSEIKKRAAQNERVLVTTLTKRMAEDLTEYFTEHNVRVRYLHSDIDTVERVEIIRDLRLGVFDVLVGINLLREGLDIPEVSLVAILDADKEGFLRSERSLIQTMGRAARNVHGKAILYADRITDSMKRAMEEAERRRIAQSAYNEKHHITPKSIQKAVTEIIEGARTYTERGRFVNQAQLIAEEEAKYIAMTPKQLAKELRKLEEQMYHHARNLEFEEAAAVRDKIQHIRKGLLEVKE</sequence>
<accession>B6J1E8</accession>
<gene>
    <name evidence="1" type="primary">uvrB</name>
    <name type="ordered locus">CbuG_1478</name>
</gene>
<proteinExistence type="inferred from homology"/>